<evidence type="ECO:0000250" key="1"/>
<evidence type="ECO:0000250" key="2">
    <source>
        <dbReference type="UniProtKB" id="Q9X1H9"/>
    </source>
</evidence>
<evidence type="ECO:0000255" key="3">
    <source>
        <dbReference type="PROSITE-ProRule" id="PRU00815"/>
    </source>
</evidence>
<accession>Q8Y637</accession>
<dbReference type="EMBL" id="AL591981">
    <property type="protein sequence ID" value="CAC99941.1"/>
    <property type="molecule type" value="Genomic_DNA"/>
</dbReference>
<dbReference type="PIR" id="AG1307">
    <property type="entry name" value="AG1307"/>
</dbReference>
<dbReference type="RefSeq" id="NP_465388.1">
    <property type="nucleotide sequence ID" value="NC_003210.1"/>
</dbReference>
<dbReference type="RefSeq" id="WP_010989830.1">
    <property type="nucleotide sequence ID" value="NZ_CP149495.1"/>
</dbReference>
<dbReference type="SMR" id="Q8Y637"/>
<dbReference type="STRING" id="169963.gene:17594548"/>
<dbReference type="PaxDb" id="169963-lmo1863"/>
<dbReference type="EnsemblBacteria" id="CAC99941">
    <property type="protein sequence ID" value="CAC99941"/>
    <property type="gene ID" value="CAC99941"/>
</dbReference>
<dbReference type="GeneID" id="985833"/>
<dbReference type="KEGG" id="lmo:lmo1863"/>
<dbReference type="PATRIC" id="fig|169963.11.peg.1908"/>
<dbReference type="eggNOG" id="COG1307">
    <property type="taxonomic scope" value="Bacteria"/>
</dbReference>
<dbReference type="HOGENOM" id="CLU_048251_3_2_9"/>
<dbReference type="OrthoDB" id="5429275at2"/>
<dbReference type="PhylomeDB" id="Q8Y637"/>
<dbReference type="BioCyc" id="LMON169963:LMO1863-MONOMER"/>
<dbReference type="Proteomes" id="UP000000817">
    <property type="component" value="Chromosome"/>
</dbReference>
<dbReference type="GO" id="GO:0008289">
    <property type="term" value="F:lipid binding"/>
    <property type="evidence" value="ECO:0007669"/>
    <property type="project" value="UniProtKB-KW"/>
</dbReference>
<dbReference type="Gene3D" id="3.30.1180.10">
    <property type="match status" value="1"/>
</dbReference>
<dbReference type="Gene3D" id="3.40.50.10170">
    <property type="match status" value="1"/>
</dbReference>
<dbReference type="InterPro" id="IPR003797">
    <property type="entry name" value="DegV"/>
</dbReference>
<dbReference type="InterPro" id="IPR043168">
    <property type="entry name" value="DegV_C"/>
</dbReference>
<dbReference type="InterPro" id="IPR050270">
    <property type="entry name" value="DegV_domain_contain"/>
</dbReference>
<dbReference type="NCBIfam" id="TIGR00762">
    <property type="entry name" value="DegV"/>
    <property type="match status" value="1"/>
</dbReference>
<dbReference type="PANTHER" id="PTHR33434">
    <property type="entry name" value="DEGV DOMAIN-CONTAINING PROTEIN DR_1986-RELATED"/>
    <property type="match status" value="1"/>
</dbReference>
<dbReference type="PANTHER" id="PTHR33434:SF8">
    <property type="entry name" value="DEGV DOMAIN-CONTAINING PROTEIN SPR1019"/>
    <property type="match status" value="1"/>
</dbReference>
<dbReference type="Pfam" id="PF02645">
    <property type="entry name" value="DegV"/>
    <property type="match status" value="1"/>
</dbReference>
<dbReference type="SUPFAM" id="SSF82549">
    <property type="entry name" value="DAK1/DegV-like"/>
    <property type="match status" value="1"/>
</dbReference>
<dbReference type="PROSITE" id="PS51482">
    <property type="entry name" value="DEGV"/>
    <property type="match status" value="1"/>
</dbReference>
<sequence length="279" mass="30960">MRKIKIITDSTAGLTLEEAAKWNIDVLYLTVEIDGKVYNPKTDITPEEFMVRMAETKELPKSSQPAIGSFVEAYEKYTAEGYEILSIHLTEKLSGTVNAARQAADMVEGNITVVDCDYTARGQAFQVLKAAEMAQSGDYSVEEIHAKINDIRDKTKLYIVVVTLDNLIKGGRVGRMQGFLGSLLNIKLIAKLTDGQLEEETKVRSNKKVLQYCLNLIKDEPKKIQHLDVVHANGLNLADDFIAESKEITGLTEIPLFFADPVISTHAGTGAFAFMYYTD</sequence>
<reference key="1">
    <citation type="journal article" date="2001" name="Science">
        <title>Comparative genomics of Listeria species.</title>
        <authorList>
            <person name="Glaser P."/>
            <person name="Frangeul L."/>
            <person name="Buchrieser C."/>
            <person name="Rusniok C."/>
            <person name="Amend A."/>
            <person name="Baquero F."/>
            <person name="Berche P."/>
            <person name="Bloecker H."/>
            <person name="Brandt P."/>
            <person name="Chakraborty T."/>
            <person name="Charbit A."/>
            <person name="Chetouani F."/>
            <person name="Couve E."/>
            <person name="de Daruvar A."/>
            <person name="Dehoux P."/>
            <person name="Domann E."/>
            <person name="Dominguez-Bernal G."/>
            <person name="Duchaud E."/>
            <person name="Durant L."/>
            <person name="Dussurget O."/>
            <person name="Entian K.-D."/>
            <person name="Fsihi H."/>
            <person name="Garcia-del Portillo F."/>
            <person name="Garrido P."/>
            <person name="Gautier L."/>
            <person name="Goebel W."/>
            <person name="Gomez-Lopez N."/>
            <person name="Hain T."/>
            <person name="Hauf J."/>
            <person name="Jackson D."/>
            <person name="Jones L.-M."/>
            <person name="Kaerst U."/>
            <person name="Kreft J."/>
            <person name="Kuhn M."/>
            <person name="Kunst F."/>
            <person name="Kurapkat G."/>
            <person name="Madueno E."/>
            <person name="Maitournam A."/>
            <person name="Mata Vicente J."/>
            <person name="Ng E."/>
            <person name="Nedjari H."/>
            <person name="Nordsiek G."/>
            <person name="Novella S."/>
            <person name="de Pablos B."/>
            <person name="Perez-Diaz J.-C."/>
            <person name="Purcell R."/>
            <person name="Remmel B."/>
            <person name="Rose M."/>
            <person name="Schlueter T."/>
            <person name="Simoes N."/>
            <person name="Tierrez A."/>
            <person name="Vazquez-Boland J.-A."/>
            <person name="Voss H."/>
            <person name="Wehland J."/>
            <person name="Cossart P."/>
        </authorList>
    </citation>
    <scope>NUCLEOTIDE SEQUENCE [LARGE SCALE GENOMIC DNA]</scope>
    <source>
        <strain>ATCC BAA-679 / EGD-e</strain>
    </source>
</reference>
<protein>
    <recommendedName>
        <fullName>DegV domain-containing protein lmo1863</fullName>
    </recommendedName>
</protein>
<keyword id="KW-0446">Lipid-binding</keyword>
<keyword id="KW-1185">Reference proteome</keyword>
<name>Y1863_LISMO</name>
<feature type="chain" id="PRO_0000209770" description="DegV domain-containing protein lmo1863">
    <location>
        <begin position="1"/>
        <end position="279"/>
    </location>
</feature>
<feature type="domain" description="DegV" evidence="3">
    <location>
        <begin position="4"/>
        <end position="278"/>
    </location>
</feature>
<feature type="binding site" evidence="2">
    <location>
        <position position="62"/>
    </location>
    <ligand>
        <name>hexadecanoate</name>
        <dbReference type="ChEBI" id="CHEBI:7896"/>
    </ligand>
</feature>
<feature type="binding site" evidence="2">
    <location>
        <position position="94"/>
    </location>
    <ligand>
        <name>hexadecanoate</name>
        <dbReference type="ChEBI" id="CHEBI:7896"/>
    </ligand>
</feature>
<gene>
    <name type="ordered locus">lmo1863</name>
</gene>
<proteinExistence type="inferred from homology"/>
<comment type="function">
    <text evidence="1">May bind long-chain fatty acids, such as palmitate, and may play a role in lipid transport or fatty acid metabolism.</text>
</comment>
<organism>
    <name type="scientific">Listeria monocytogenes serovar 1/2a (strain ATCC BAA-679 / EGD-e)</name>
    <dbReference type="NCBI Taxonomy" id="169963"/>
    <lineage>
        <taxon>Bacteria</taxon>
        <taxon>Bacillati</taxon>
        <taxon>Bacillota</taxon>
        <taxon>Bacilli</taxon>
        <taxon>Bacillales</taxon>
        <taxon>Listeriaceae</taxon>
        <taxon>Listeria</taxon>
    </lineage>
</organism>